<comment type="function">
    <text evidence="2">Involved in base excision repair of DNA damaged by oxidation or by mutagenic agents. Acts as a DNA glycosylase that recognizes and removes damaged bases. Has a preference for oxidized purines, such as 7,8-dihydro-8-oxoguanine (8-oxoG). Has AP (apurinic/apyrimidinic) lyase activity and introduces nicks in the DNA strand. Cleaves the DNA backbone by beta-delta elimination to generate a single-strand break at the site of the removed base with both 3'- and 5'-phosphates.</text>
</comment>
<comment type="catalytic activity">
    <reaction evidence="2">
        <text>Hydrolysis of DNA containing ring-opened 7-methylguanine residues, releasing 2,6-diamino-4-hydroxy-5-(N-methyl)formamidopyrimidine.</text>
        <dbReference type="EC" id="3.2.2.23"/>
    </reaction>
</comment>
<comment type="catalytic activity">
    <reaction evidence="2">
        <text>2'-deoxyribonucleotide-(2'-deoxyribose 5'-phosphate)-2'-deoxyribonucleotide-DNA = a 3'-end 2'-deoxyribonucleotide-(2,3-dehydro-2,3-deoxyribose 5'-phosphate)-DNA + a 5'-end 5'-phospho-2'-deoxyribonucleoside-DNA + H(+)</text>
        <dbReference type="Rhea" id="RHEA:66592"/>
        <dbReference type="Rhea" id="RHEA-COMP:13180"/>
        <dbReference type="Rhea" id="RHEA-COMP:16897"/>
        <dbReference type="Rhea" id="RHEA-COMP:17067"/>
        <dbReference type="ChEBI" id="CHEBI:15378"/>
        <dbReference type="ChEBI" id="CHEBI:136412"/>
        <dbReference type="ChEBI" id="CHEBI:157695"/>
        <dbReference type="ChEBI" id="CHEBI:167181"/>
        <dbReference type="EC" id="4.2.99.18"/>
    </reaction>
</comment>
<comment type="cofactor">
    <cofactor evidence="2">
        <name>Zn(2+)</name>
        <dbReference type="ChEBI" id="CHEBI:29105"/>
    </cofactor>
    <text evidence="2">Binds 1 zinc ion per subunit.</text>
</comment>
<comment type="subunit">
    <text evidence="2">Monomer.</text>
</comment>
<comment type="similarity">
    <text evidence="2">Belongs to the FPG family.</text>
</comment>
<reference key="1">
    <citation type="submission" date="2007-02" db="EMBL/GenBank/DDBJ databases">
        <title>Complete sequence of chromosome of Shewanella baltica OS155.</title>
        <authorList>
            <consortium name="US DOE Joint Genome Institute"/>
            <person name="Copeland A."/>
            <person name="Lucas S."/>
            <person name="Lapidus A."/>
            <person name="Barry K."/>
            <person name="Detter J.C."/>
            <person name="Glavina del Rio T."/>
            <person name="Hammon N."/>
            <person name="Israni S."/>
            <person name="Dalin E."/>
            <person name="Tice H."/>
            <person name="Pitluck S."/>
            <person name="Sims D.R."/>
            <person name="Brettin T."/>
            <person name="Bruce D."/>
            <person name="Han C."/>
            <person name="Tapia R."/>
            <person name="Brainard J."/>
            <person name="Schmutz J."/>
            <person name="Larimer F."/>
            <person name="Land M."/>
            <person name="Hauser L."/>
            <person name="Kyrpides N."/>
            <person name="Mikhailova N."/>
            <person name="Brettar I."/>
            <person name="Klappenbach J."/>
            <person name="Konstantinidis K."/>
            <person name="Rodrigues J."/>
            <person name="Tiedje J."/>
            <person name="Richardson P."/>
        </authorList>
    </citation>
    <scope>NUCLEOTIDE SEQUENCE [LARGE SCALE GENOMIC DNA]</scope>
    <source>
        <strain>OS155 / ATCC BAA-1091</strain>
    </source>
</reference>
<accession>A3CYP7</accession>
<evidence type="ECO:0000250" key="1"/>
<evidence type="ECO:0000255" key="2">
    <source>
        <dbReference type="HAMAP-Rule" id="MF_00103"/>
    </source>
</evidence>
<organism>
    <name type="scientific">Shewanella baltica (strain OS155 / ATCC BAA-1091)</name>
    <dbReference type="NCBI Taxonomy" id="325240"/>
    <lineage>
        <taxon>Bacteria</taxon>
        <taxon>Pseudomonadati</taxon>
        <taxon>Pseudomonadota</taxon>
        <taxon>Gammaproteobacteria</taxon>
        <taxon>Alteromonadales</taxon>
        <taxon>Shewanellaceae</taxon>
        <taxon>Shewanella</taxon>
    </lineage>
</organism>
<name>FPG_SHEB5</name>
<dbReference type="EC" id="3.2.2.23" evidence="2"/>
<dbReference type="EC" id="4.2.99.18" evidence="2"/>
<dbReference type="EMBL" id="CP000563">
    <property type="protein sequence ID" value="ABN59610.1"/>
    <property type="molecule type" value="Genomic_DNA"/>
</dbReference>
<dbReference type="RefSeq" id="WP_011845381.1">
    <property type="nucleotide sequence ID" value="NC_009052.1"/>
</dbReference>
<dbReference type="SMR" id="A3CYP7"/>
<dbReference type="STRING" id="325240.Sbal_0075"/>
<dbReference type="KEGG" id="sbl:Sbal_0075"/>
<dbReference type="HOGENOM" id="CLU_038423_1_1_6"/>
<dbReference type="OrthoDB" id="9800855at2"/>
<dbReference type="Proteomes" id="UP000001557">
    <property type="component" value="Chromosome"/>
</dbReference>
<dbReference type="GO" id="GO:0034039">
    <property type="term" value="F:8-oxo-7,8-dihydroguanine DNA N-glycosylase activity"/>
    <property type="evidence" value="ECO:0007669"/>
    <property type="project" value="TreeGrafter"/>
</dbReference>
<dbReference type="GO" id="GO:0140078">
    <property type="term" value="F:class I DNA-(apurinic or apyrimidinic site) endonuclease activity"/>
    <property type="evidence" value="ECO:0007669"/>
    <property type="project" value="UniProtKB-EC"/>
</dbReference>
<dbReference type="GO" id="GO:0003684">
    <property type="term" value="F:damaged DNA binding"/>
    <property type="evidence" value="ECO:0007669"/>
    <property type="project" value="InterPro"/>
</dbReference>
<dbReference type="GO" id="GO:0008270">
    <property type="term" value="F:zinc ion binding"/>
    <property type="evidence" value="ECO:0007669"/>
    <property type="project" value="UniProtKB-UniRule"/>
</dbReference>
<dbReference type="GO" id="GO:0006284">
    <property type="term" value="P:base-excision repair"/>
    <property type="evidence" value="ECO:0007669"/>
    <property type="project" value="InterPro"/>
</dbReference>
<dbReference type="CDD" id="cd08966">
    <property type="entry name" value="EcFpg-like_N"/>
    <property type="match status" value="1"/>
</dbReference>
<dbReference type="FunFam" id="1.10.8.50:FF:000003">
    <property type="entry name" value="Formamidopyrimidine-DNA glycosylase"/>
    <property type="match status" value="1"/>
</dbReference>
<dbReference type="FunFam" id="3.20.190.10:FF:000001">
    <property type="entry name" value="Formamidopyrimidine-DNA glycosylase"/>
    <property type="match status" value="1"/>
</dbReference>
<dbReference type="Gene3D" id="1.10.8.50">
    <property type="match status" value="1"/>
</dbReference>
<dbReference type="Gene3D" id="3.20.190.10">
    <property type="entry name" value="MutM-like, N-terminal"/>
    <property type="match status" value="1"/>
</dbReference>
<dbReference type="HAMAP" id="MF_00103">
    <property type="entry name" value="Fapy_DNA_glycosyl"/>
    <property type="match status" value="1"/>
</dbReference>
<dbReference type="InterPro" id="IPR015886">
    <property type="entry name" value="DNA_glyclase/AP_lyase_DNA-bd"/>
</dbReference>
<dbReference type="InterPro" id="IPR015887">
    <property type="entry name" value="DNA_glyclase_Znf_dom_DNA_BS"/>
</dbReference>
<dbReference type="InterPro" id="IPR020629">
    <property type="entry name" value="Formamido-pyr_DNA_Glyclase"/>
</dbReference>
<dbReference type="InterPro" id="IPR012319">
    <property type="entry name" value="FPG_cat"/>
</dbReference>
<dbReference type="InterPro" id="IPR035937">
    <property type="entry name" value="MutM-like_N-ter"/>
</dbReference>
<dbReference type="InterPro" id="IPR010979">
    <property type="entry name" value="Ribosomal_uS13-like_H2TH"/>
</dbReference>
<dbReference type="InterPro" id="IPR000214">
    <property type="entry name" value="Znf_DNA_glyclase/AP_lyase"/>
</dbReference>
<dbReference type="InterPro" id="IPR010663">
    <property type="entry name" value="Znf_FPG/IleRS"/>
</dbReference>
<dbReference type="NCBIfam" id="TIGR00577">
    <property type="entry name" value="fpg"/>
    <property type="match status" value="1"/>
</dbReference>
<dbReference type="NCBIfam" id="NF002211">
    <property type="entry name" value="PRK01103.1"/>
    <property type="match status" value="1"/>
</dbReference>
<dbReference type="PANTHER" id="PTHR22993">
    <property type="entry name" value="FORMAMIDOPYRIMIDINE-DNA GLYCOSYLASE"/>
    <property type="match status" value="1"/>
</dbReference>
<dbReference type="PANTHER" id="PTHR22993:SF9">
    <property type="entry name" value="FORMAMIDOPYRIMIDINE-DNA GLYCOSYLASE"/>
    <property type="match status" value="1"/>
</dbReference>
<dbReference type="Pfam" id="PF01149">
    <property type="entry name" value="Fapy_DNA_glyco"/>
    <property type="match status" value="1"/>
</dbReference>
<dbReference type="Pfam" id="PF06831">
    <property type="entry name" value="H2TH"/>
    <property type="match status" value="1"/>
</dbReference>
<dbReference type="Pfam" id="PF06827">
    <property type="entry name" value="zf-FPG_IleRS"/>
    <property type="match status" value="1"/>
</dbReference>
<dbReference type="SMART" id="SM00898">
    <property type="entry name" value="Fapy_DNA_glyco"/>
    <property type="match status" value="1"/>
</dbReference>
<dbReference type="SMART" id="SM01232">
    <property type="entry name" value="H2TH"/>
    <property type="match status" value="1"/>
</dbReference>
<dbReference type="SUPFAM" id="SSF57716">
    <property type="entry name" value="Glucocorticoid receptor-like (DNA-binding domain)"/>
    <property type="match status" value="1"/>
</dbReference>
<dbReference type="SUPFAM" id="SSF81624">
    <property type="entry name" value="N-terminal domain of MutM-like DNA repair proteins"/>
    <property type="match status" value="1"/>
</dbReference>
<dbReference type="SUPFAM" id="SSF46946">
    <property type="entry name" value="S13-like H2TH domain"/>
    <property type="match status" value="1"/>
</dbReference>
<dbReference type="PROSITE" id="PS51068">
    <property type="entry name" value="FPG_CAT"/>
    <property type="match status" value="1"/>
</dbReference>
<dbReference type="PROSITE" id="PS01242">
    <property type="entry name" value="ZF_FPG_1"/>
    <property type="match status" value="1"/>
</dbReference>
<dbReference type="PROSITE" id="PS51066">
    <property type="entry name" value="ZF_FPG_2"/>
    <property type="match status" value="1"/>
</dbReference>
<sequence>MPELPEVEVTRQGIAPFLVEQTVVDLVIRNGSLRWPVPDIAKQIIGQVIRQVRRRAKYLLIDTDAGTSIVHLGMSGSLRILPHDTPVEKHDHIDLVLANGRILRFNDPRRFGAWLWCELPEEAHPLLAKLGPEPLTQAFNVAQLAAALAGKKKAIKLCLMDNHIVVGVGNIYANEALFAAGIHPEAEAGKIDIERLTVLVAEVKQILAHAIKQGGTTLKDFTNADGKPGYFAQKLHVYGRGGETCTSCGNLLSEIRLGQRTTVFCGICQTR</sequence>
<protein>
    <recommendedName>
        <fullName evidence="2">Formamidopyrimidine-DNA glycosylase</fullName>
        <shortName evidence="2">Fapy-DNA glycosylase</shortName>
        <ecNumber evidence="2">3.2.2.23</ecNumber>
    </recommendedName>
    <alternativeName>
        <fullName evidence="2">DNA-(apurinic or apyrimidinic site) lyase MutM</fullName>
        <shortName evidence="2">AP lyase MutM</shortName>
        <ecNumber evidence="2">4.2.99.18</ecNumber>
    </alternativeName>
</protein>
<feature type="initiator methionine" description="Removed" evidence="1">
    <location>
        <position position="1"/>
    </location>
</feature>
<feature type="chain" id="PRO_1000008770" description="Formamidopyrimidine-DNA glycosylase">
    <location>
        <begin position="2"/>
        <end position="271"/>
    </location>
</feature>
<feature type="zinc finger region" description="FPG-type" evidence="2">
    <location>
        <begin position="236"/>
        <end position="270"/>
    </location>
</feature>
<feature type="active site" description="Schiff-base intermediate with DNA" evidence="2">
    <location>
        <position position="2"/>
    </location>
</feature>
<feature type="active site" description="Proton donor" evidence="2">
    <location>
        <position position="3"/>
    </location>
</feature>
<feature type="active site" description="Proton donor; for beta-elimination activity" evidence="2">
    <location>
        <position position="57"/>
    </location>
</feature>
<feature type="active site" description="Proton donor; for delta-elimination activity" evidence="2">
    <location>
        <position position="260"/>
    </location>
</feature>
<feature type="binding site" evidence="2">
    <location>
        <position position="90"/>
    </location>
    <ligand>
        <name>DNA</name>
        <dbReference type="ChEBI" id="CHEBI:16991"/>
    </ligand>
</feature>
<feature type="binding site" evidence="2">
    <location>
        <position position="109"/>
    </location>
    <ligand>
        <name>DNA</name>
        <dbReference type="ChEBI" id="CHEBI:16991"/>
    </ligand>
</feature>
<feature type="binding site" evidence="2">
    <location>
        <position position="151"/>
    </location>
    <ligand>
        <name>DNA</name>
        <dbReference type="ChEBI" id="CHEBI:16991"/>
    </ligand>
</feature>
<gene>
    <name evidence="2" type="primary">mutM</name>
    <name evidence="2" type="synonym">fpg</name>
    <name type="ordered locus">Sbal_0075</name>
</gene>
<proteinExistence type="inferred from homology"/>
<keyword id="KW-0227">DNA damage</keyword>
<keyword id="KW-0234">DNA repair</keyword>
<keyword id="KW-0238">DNA-binding</keyword>
<keyword id="KW-0326">Glycosidase</keyword>
<keyword id="KW-0378">Hydrolase</keyword>
<keyword id="KW-0456">Lyase</keyword>
<keyword id="KW-0479">Metal-binding</keyword>
<keyword id="KW-0511">Multifunctional enzyme</keyword>
<keyword id="KW-1185">Reference proteome</keyword>
<keyword id="KW-0862">Zinc</keyword>
<keyword id="KW-0863">Zinc-finger</keyword>